<reference key="1">
    <citation type="submission" date="2006-09" db="EMBL/GenBank/DDBJ databases">
        <authorList>
            <consortium name="The Klebsiella pneumonia Genome Sequencing Project"/>
            <person name="McClelland M."/>
            <person name="Sanderson E.K."/>
            <person name="Spieth J."/>
            <person name="Clifton W.S."/>
            <person name="Latreille P."/>
            <person name="Sabo A."/>
            <person name="Pepin K."/>
            <person name="Bhonagiri V."/>
            <person name="Porwollik S."/>
            <person name="Ali J."/>
            <person name="Wilson R.K."/>
        </authorList>
    </citation>
    <scope>NUCLEOTIDE SEQUENCE [LARGE SCALE GENOMIC DNA]</scope>
    <source>
        <strain>ATCC 700721 / MGH 78578</strain>
    </source>
</reference>
<proteinExistence type="inferred from homology"/>
<comment type="subcellular location">
    <subcellularLocation>
        <location evidence="1">Cytoplasm</location>
    </subcellularLocation>
</comment>
<comment type="similarity">
    <text evidence="1">Belongs to the TACO1 family.</text>
</comment>
<dbReference type="EMBL" id="CP000647">
    <property type="protein sequence ID" value="ABR77804.1"/>
    <property type="molecule type" value="Genomic_DNA"/>
</dbReference>
<dbReference type="RefSeq" id="WP_002911459.1">
    <property type="nucleotide sequence ID" value="NC_009648.1"/>
</dbReference>
<dbReference type="SMR" id="A6TB33"/>
<dbReference type="STRING" id="272620.KPN_02378"/>
<dbReference type="jPOST" id="A6TB33"/>
<dbReference type="PaxDb" id="272620-KPN_02378"/>
<dbReference type="EnsemblBacteria" id="ABR77804">
    <property type="protein sequence ID" value="ABR77804"/>
    <property type="gene ID" value="KPN_02378"/>
</dbReference>
<dbReference type="KEGG" id="kpn:KPN_02378"/>
<dbReference type="HOGENOM" id="CLU_062974_2_2_6"/>
<dbReference type="Proteomes" id="UP000000265">
    <property type="component" value="Chromosome"/>
</dbReference>
<dbReference type="GO" id="GO:0005829">
    <property type="term" value="C:cytosol"/>
    <property type="evidence" value="ECO:0007669"/>
    <property type="project" value="TreeGrafter"/>
</dbReference>
<dbReference type="GO" id="GO:0003677">
    <property type="term" value="F:DNA binding"/>
    <property type="evidence" value="ECO:0007669"/>
    <property type="project" value="UniProtKB-UniRule"/>
</dbReference>
<dbReference type="GO" id="GO:0006355">
    <property type="term" value="P:regulation of DNA-templated transcription"/>
    <property type="evidence" value="ECO:0007669"/>
    <property type="project" value="UniProtKB-UniRule"/>
</dbReference>
<dbReference type="FunFam" id="1.10.10.200:FF:000001">
    <property type="entry name" value="Probable transcriptional regulatory protein YebC"/>
    <property type="match status" value="1"/>
</dbReference>
<dbReference type="FunFam" id="3.30.70.980:FF:000002">
    <property type="entry name" value="Probable transcriptional regulatory protein YebC"/>
    <property type="match status" value="1"/>
</dbReference>
<dbReference type="Gene3D" id="1.10.10.200">
    <property type="match status" value="1"/>
</dbReference>
<dbReference type="Gene3D" id="3.30.70.980">
    <property type="match status" value="2"/>
</dbReference>
<dbReference type="HAMAP" id="MF_00693">
    <property type="entry name" value="Transcrip_reg_TACO1"/>
    <property type="match status" value="1"/>
</dbReference>
<dbReference type="InterPro" id="IPR017856">
    <property type="entry name" value="Integrase-like_N"/>
</dbReference>
<dbReference type="InterPro" id="IPR048300">
    <property type="entry name" value="TACO1_YebC-like_2nd/3rd_dom"/>
</dbReference>
<dbReference type="InterPro" id="IPR049083">
    <property type="entry name" value="TACO1_YebC_N"/>
</dbReference>
<dbReference type="InterPro" id="IPR002876">
    <property type="entry name" value="Transcrip_reg_TACO1-like"/>
</dbReference>
<dbReference type="InterPro" id="IPR026564">
    <property type="entry name" value="Transcrip_reg_TACO1-like_dom3"/>
</dbReference>
<dbReference type="InterPro" id="IPR029072">
    <property type="entry name" value="YebC-like"/>
</dbReference>
<dbReference type="NCBIfam" id="NF001030">
    <property type="entry name" value="PRK00110.1"/>
    <property type="match status" value="1"/>
</dbReference>
<dbReference type="NCBIfam" id="NF009044">
    <property type="entry name" value="PRK12378.1"/>
    <property type="match status" value="1"/>
</dbReference>
<dbReference type="NCBIfam" id="TIGR01033">
    <property type="entry name" value="YebC/PmpR family DNA-binding transcriptional regulator"/>
    <property type="match status" value="1"/>
</dbReference>
<dbReference type="PANTHER" id="PTHR12532:SF6">
    <property type="entry name" value="TRANSCRIPTIONAL REGULATORY PROTEIN YEBC-RELATED"/>
    <property type="match status" value="1"/>
</dbReference>
<dbReference type="PANTHER" id="PTHR12532">
    <property type="entry name" value="TRANSLATIONAL ACTIVATOR OF CYTOCHROME C OXIDASE 1"/>
    <property type="match status" value="1"/>
</dbReference>
<dbReference type="Pfam" id="PF20772">
    <property type="entry name" value="TACO1_YebC_N"/>
    <property type="match status" value="1"/>
</dbReference>
<dbReference type="Pfam" id="PF01709">
    <property type="entry name" value="Transcrip_reg"/>
    <property type="match status" value="1"/>
</dbReference>
<dbReference type="SUPFAM" id="SSF75625">
    <property type="entry name" value="YebC-like"/>
    <property type="match status" value="1"/>
</dbReference>
<sequence length="246" mass="26317">MAGHSKWANTKHRKAAQDAKRGKIFTKIIRELVTAARLGGGDPASNPRLRAAVDKALSNNMTRDTLNRAIARGVGGDEDANMETIIYEGYGPGGTAVMVECLSDNRNRTVAEVRHAFTKTGGNLGTDGSVSYLFSKKGVISFEKGDEDTIMEAALEAGAEDVVTYDDGAIDVYTAWEEMGAVRDALEAAGLKADAAEVSMIPSTKADMDAETAPKLLRLIDMLEDCDDVQEVYHNGEISDEVAATL</sequence>
<protein>
    <recommendedName>
        <fullName evidence="1">Probable transcriptional regulatory protein KPN78578_23430</fullName>
    </recommendedName>
</protein>
<evidence type="ECO:0000255" key="1">
    <source>
        <dbReference type="HAMAP-Rule" id="MF_00693"/>
    </source>
</evidence>
<name>Y2343_KLEP7</name>
<organism>
    <name type="scientific">Klebsiella pneumoniae subsp. pneumoniae (strain ATCC 700721 / MGH 78578)</name>
    <dbReference type="NCBI Taxonomy" id="272620"/>
    <lineage>
        <taxon>Bacteria</taxon>
        <taxon>Pseudomonadati</taxon>
        <taxon>Pseudomonadota</taxon>
        <taxon>Gammaproteobacteria</taxon>
        <taxon>Enterobacterales</taxon>
        <taxon>Enterobacteriaceae</taxon>
        <taxon>Klebsiella/Raoultella group</taxon>
        <taxon>Klebsiella</taxon>
        <taxon>Klebsiella pneumoniae complex</taxon>
    </lineage>
</organism>
<gene>
    <name type="ordered locus">KPN78578_23430</name>
    <name type="ORF">KPN_02378</name>
</gene>
<accession>A6TB33</accession>
<keyword id="KW-0963">Cytoplasm</keyword>
<keyword id="KW-0238">DNA-binding</keyword>
<keyword id="KW-0804">Transcription</keyword>
<keyword id="KW-0805">Transcription regulation</keyword>
<feature type="chain" id="PRO_1000062038" description="Probable transcriptional regulatory protein KPN78578_23430">
    <location>
        <begin position="1"/>
        <end position="246"/>
    </location>
</feature>